<feature type="chain" id="PRO_0000094453" description="H(+)/Cl(-) exchange transporter 7">
    <location>
        <begin position="1"/>
        <end position="803"/>
    </location>
</feature>
<feature type="topological domain" description="Cytoplasmic" evidence="1">
    <location>
        <begin position="1"/>
        <end position="124"/>
    </location>
</feature>
<feature type="transmembrane region" description="Helical" evidence="1">
    <location>
        <begin position="125"/>
        <end position="157"/>
    </location>
</feature>
<feature type="transmembrane region" description="Helical" evidence="1">
    <location>
        <begin position="172"/>
        <end position="195"/>
    </location>
</feature>
<feature type="intramembrane region" description="Helical" evidence="1">
    <location>
        <begin position="204"/>
        <end position="211"/>
    </location>
</feature>
<feature type="transmembrane region" description="Helical" evidence="1">
    <location>
        <begin position="221"/>
        <end position="239"/>
    </location>
</feature>
<feature type="transmembrane region" description="Helical" evidence="1">
    <location>
        <begin position="245"/>
        <end position="262"/>
    </location>
</feature>
<feature type="intramembrane region" description="Helical" evidence="1">
    <location>
        <begin position="286"/>
        <end position="298"/>
    </location>
</feature>
<feature type="intramembrane region" description="Helical" evidence="1">
    <location>
        <begin position="302"/>
        <end position="310"/>
    </location>
</feature>
<feature type="transmembrane region" description="Helical" evidence="1">
    <location>
        <begin position="320"/>
        <end position="339"/>
    </location>
</feature>
<feature type="transmembrane region" description="Helical" evidence="1">
    <location>
        <begin position="373"/>
        <end position="403"/>
    </location>
</feature>
<feature type="transmembrane region" description="Helical" evidence="1">
    <location>
        <begin position="408"/>
        <end position="430"/>
    </location>
</feature>
<feature type="transmembrane region" description="Helical" evidence="1">
    <location>
        <begin position="485"/>
        <end position="505"/>
    </location>
</feature>
<feature type="transmembrane region" description="Helical" evidence="1">
    <location>
        <begin position="510"/>
        <end position="533"/>
    </location>
</feature>
<feature type="intramembrane region" description="Helical" evidence="1">
    <location>
        <begin position="543"/>
        <end position="557"/>
    </location>
</feature>
<feature type="intramembrane region" description="Note=Loop between two helices" evidence="1">
    <location>
        <begin position="558"/>
        <end position="560"/>
    </location>
</feature>
<feature type="intramembrane region" description="Helical" evidence="1">
    <location>
        <begin position="561"/>
        <end position="572"/>
    </location>
</feature>
<feature type="intramembrane region" description="Note=Loop between two helices" evidence="1">
    <location>
        <begin position="573"/>
        <end position="576"/>
    </location>
</feature>
<feature type="transmembrane region" description="Helical" evidence="1">
    <location>
        <begin position="577"/>
        <end position="595"/>
    </location>
</feature>
<feature type="topological domain" description="Cytoplasmic" evidence="1">
    <location>
        <begin position="596"/>
        <end position="803"/>
    </location>
</feature>
<feature type="domain" description="CBS 1" evidence="4">
    <location>
        <begin position="629"/>
        <end position="693"/>
    </location>
</feature>
<feature type="domain" description="CBS 2" evidence="4">
    <location>
        <begin position="739"/>
        <end position="797"/>
    </location>
</feature>
<feature type="region of interest" description="Disordered" evidence="5">
    <location>
        <begin position="1"/>
        <end position="46"/>
    </location>
</feature>
<feature type="short sequence motif" description="Selectivity filter part_1" evidence="1">
    <location>
        <begin position="201"/>
        <end position="205"/>
    </location>
</feature>
<feature type="short sequence motif" description="Selectivity filter part_2" evidence="1">
    <location>
        <begin position="243"/>
        <end position="247"/>
    </location>
</feature>
<feature type="short sequence motif" description="Selectivity filter part_3" evidence="1">
    <location>
        <begin position="510"/>
        <end position="514"/>
    </location>
</feature>
<feature type="binding site" evidence="1">
    <location>
        <position position="202"/>
    </location>
    <ligand>
        <name>chloride</name>
        <dbReference type="ChEBI" id="CHEBI:17996"/>
    </ligand>
</feature>
<feature type="binding site" evidence="1">
    <location>
        <position position="512"/>
    </location>
    <ligand>
        <name>chloride</name>
        <dbReference type="ChEBI" id="CHEBI:17996"/>
    </ligand>
</feature>
<feature type="binding site" evidence="1">
    <location>
        <position position="600"/>
    </location>
    <ligand>
        <name>chloride</name>
        <dbReference type="ChEBI" id="CHEBI:17996"/>
    </ligand>
</feature>
<feature type="binding site" evidence="1">
    <location>
        <begin position="656"/>
        <end position="658"/>
    </location>
    <ligand>
        <name>ATP</name>
        <dbReference type="ChEBI" id="CHEBI:30616"/>
    </ligand>
</feature>
<feature type="binding site" evidence="1">
    <location>
        <begin position="781"/>
        <end position="784"/>
    </location>
    <ligand>
        <name>ATP</name>
        <dbReference type="ChEBI" id="CHEBI:30616"/>
    </ligand>
</feature>
<feature type="site" description="Mediates proton transfer from the outer aqueous phase to the interior of the protein; involved in linking H(+) and Cl(-) transport" evidence="1">
    <location>
        <position position="245"/>
    </location>
</feature>
<feature type="site" description="Mediates proton transfer from the protein to the inner aqueous phase" evidence="1">
    <location>
        <position position="312"/>
    </location>
</feature>
<feature type="modified residue" description="Phosphoserine" evidence="11">
    <location>
        <position position="9"/>
    </location>
</feature>
<feature type="modified residue" description="Phosphoserine" evidence="3">
    <location>
        <position position="799"/>
    </location>
</feature>
<feature type="mutagenesis site" description="Increased cytoplasmic vacuole size. Knockin mice develop albinism and lysosomal-storage disease." evidence="8">
    <original>Y</original>
    <variation>C</variation>
    <location>
        <position position="713"/>
    </location>
</feature>
<name>CLCN7_MOUSE</name>
<protein>
    <recommendedName>
        <fullName>H(+)/Cl(-) exchange transporter 7</fullName>
    </recommendedName>
    <alternativeName>
        <fullName>Chloride channel 7 alpha subunit</fullName>
    </alternativeName>
    <alternativeName>
        <fullName>Chloride channel protein 7</fullName>
        <shortName>ClC-7</shortName>
    </alternativeName>
</protein>
<evidence type="ECO:0000250" key="1"/>
<evidence type="ECO:0000250" key="2">
    <source>
        <dbReference type="UniProtKB" id="P35523"/>
    </source>
</evidence>
<evidence type="ECO:0000250" key="3">
    <source>
        <dbReference type="UniProtKB" id="P51798"/>
    </source>
</evidence>
<evidence type="ECO:0000255" key="4">
    <source>
        <dbReference type="PROSITE-ProRule" id="PRU00703"/>
    </source>
</evidence>
<evidence type="ECO:0000256" key="5">
    <source>
        <dbReference type="SAM" id="MobiDB-lite"/>
    </source>
</evidence>
<evidence type="ECO:0000269" key="6">
    <source>
    </source>
</evidence>
<evidence type="ECO:0000269" key="7">
    <source>
    </source>
</evidence>
<evidence type="ECO:0000269" key="8">
    <source>
    </source>
</evidence>
<evidence type="ECO:0000305" key="9"/>
<evidence type="ECO:0000312" key="10">
    <source>
        <dbReference type="MGI" id="MGI:1347048"/>
    </source>
</evidence>
<evidence type="ECO:0007744" key="11">
    <source>
    </source>
</evidence>
<keyword id="KW-0050">Antiport</keyword>
<keyword id="KW-0067">ATP-binding</keyword>
<keyword id="KW-0129">CBS domain</keyword>
<keyword id="KW-0868">Chloride</keyword>
<keyword id="KW-0406">Ion transport</keyword>
<keyword id="KW-0458">Lysosome</keyword>
<keyword id="KW-0472">Membrane</keyword>
<keyword id="KW-0547">Nucleotide-binding</keyword>
<keyword id="KW-0597">Phosphoprotein</keyword>
<keyword id="KW-1185">Reference proteome</keyword>
<keyword id="KW-0677">Repeat</keyword>
<keyword id="KW-0812">Transmembrane</keyword>
<keyword id="KW-1133">Transmembrane helix</keyword>
<keyword id="KW-0813">Transport</keyword>
<organism>
    <name type="scientific">Mus musculus</name>
    <name type="common">Mouse</name>
    <dbReference type="NCBI Taxonomy" id="10090"/>
    <lineage>
        <taxon>Eukaryota</taxon>
        <taxon>Metazoa</taxon>
        <taxon>Chordata</taxon>
        <taxon>Craniata</taxon>
        <taxon>Vertebrata</taxon>
        <taxon>Euteleostomi</taxon>
        <taxon>Mammalia</taxon>
        <taxon>Eutheria</taxon>
        <taxon>Euarchontoglires</taxon>
        <taxon>Glires</taxon>
        <taxon>Rodentia</taxon>
        <taxon>Myomorpha</taxon>
        <taxon>Muroidea</taxon>
        <taxon>Muridae</taxon>
        <taxon>Murinae</taxon>
        <taxon>Mus</taxon>
        <taxon>Mus</taxon>
    </lineage>
</organism>
<proteinExistence type="evidence at protein level"/>
<comment type="function">
    <text evidence="2 6 7">Slowly voltage-gated channel mediating the exchange of chloride ions against protons (PubMed:16525474, PubMed:19661288). Functions as antiporter and contributes to the acidification of the lysosome lumen and may be involved in maintaining lysosomal pH (PubMed:16525474, PubMed:19661288). The CLC channel family contains both chloride channels and proton-coupled anion transporters that exchange chloride or another anion for protons (By similarity). The presence of conserved gating glutamate residues is typical for family members that function as antiporters (By similarity).</text>
</comment>
<comment type="catalytic activity">
    <reaction evidence="3">
        <text>2 chloride(in) + H(+)(out) = 2 chloride(out) + H(+)(in)</text>
        <dbReference type="Rhea" id="RHEA:29567"/>
        <dbReference type="ChEBI" id="CHEBI:15378"/>
        <dbReference type="ChEBI" id="CHEBI:17996"/>
    </reaction>
</comment>
<comment type="subunit">
    <text evidence="6">Chloride channel 7 are heteromers of alpha (CLCN7) and beta (OSTM1) subunits.</text>
</comment>
<comment type="interaction">
    <interactant intactId="EBI-987482">
        <id>O70496</id>
    </interactant>
    <interactant intactId="EBI-987431">
        <id>Q8BGT0</id>
        <label>Ostm1</label>
    </interactant>
    <organismsDiffer>false</organismsDiffer>
    <experiments>7</experiments>
</comment>
<comment type="subcellular location">
    <subcellularLocation>
        <location evidence="6 8">Lysosome membrane</location>
        <topology evidence="6">Multi-pass membrane protein</topology>
    </subcellularLocation>
</comment>
<comment type="tissue specificity">
    <text evidence="8">Liver, spleen, kidneys and brain.</text>
</comment>
<comment type="disruption phenotype">
    <text evidence="7">Accumulates undegraded endocyted material in neurons or renal proximal tubular cells. Almost all ClC-7-deficient neurons die.</text>
</comment>
<comment type="similarity">
    <text evidence="9">Belongs to the chloride channel (TC 2.A.49) family. ClC-7/CLCN7 subfamily.</text>
</comment>
<gene>
    <name evidence="10" type="primary">Clcn7</name>
    <name type="synonym">Clc7</name>
</gene>
<accession>O70496</accession>
<sequence>MANVSKKVSWSGRDRDDEEGAPLLRRTGQPDEETPLLNGAGPGARQSHSALFRIGQMNNVELDDELLDPEVDPPHTFPKEIPHNEKLLSLKYESLDYDNSENQLFLEEERRINHTAFRTVEIKRWVICALIGILTGLVACFIDIVVENLAGLKYRVIKDNIDKFTEKGGLSFSLLLWATLNSAFVLVGSVIVAFIEPVAAGSGIPQIKCFLNGVKIPHVVRLKTLVIKVSGVILSVVGGLAVGKEGPMIHSGSVIAAGISQGRSTSLKRDFKIFEYFRRDTEKRDFVSAGAAAGVSAAFGAPVGGVLFSLEEGASFWNQFLTWRIFFASMISTFTLNFVLSIYHGNMWDLSSPGLINFGRFDSEKMAYTIHEIPVFIAMGVVGGILGAVFNALNYWLTMFRIRYIHRPCLQVIEAMLVAAVTATVAFVLIYSSRDCQPLQGSSMSYPLQLFCADGEYNSMAAAFFNTPEKSVVSLFHDPPGSYNPMTLGLFTLVYFFLACWTYGLTVSAGVFIPSLLIGAAWGRLFGISLSYLTGAAIWADPGKYALMGAAAQLGGIVRMTLSLTVIMMEATSNVTYGFPIMLVLMTAKIVGDVFIEGLYDMHIQLQSVPFLHWEAPVTSHSLTAREVMSTPVTCLRRREKVGIIVDVLSDTASNHNGFPVVEDVGDTQPARLQGLILRSQLIVLLKHKVFVERSNMGLVQRRLRLKDFRDAYPRFPPIQSIHVSQDERECTMDLSEFMNPSPYTVPQEASLPRVFKLFRALGLRHLVVVDNHNQVVGLVTRKDLARYRLGKGGLEELSLAQT</sequence>
<reference key="1">
    <citation type="journal article" date="2001" name="Cell">
        <title>Loss of the ClC-7 chloride channel leads to osteopetrosis in mice and man.</title>
        <authorList>
            <person name="Kornak U."/>
            <person name="Kasper D."/>
            <person name="Boesl M.R."/>
            <person name="Kaiser E."/>
            <person name="Schweizer M."/>
            <person name="Schulz A."/>
            <person name="Friedrich W."/>
            <person name="Delling G."/>
            <person name="Jentsch T.J."/>
        </authorList>
    </citation>
    <scope>NUCLEOTIDE SEQUENCE</scope>
</reference>
<reference key="2">
    <citation type="journal article" date="2004" name="Genome Res.">
        <title>The status, quality, and expansion of the NIH full-length cDNA project: the Mammalian Gene Collection (MGC).</title>
        <authorList>
            <consortium name="The MGC Project Team"/>
        </authorList>
    </citation>
    <scope>NUCLEOTIDE SEQUENCE [LARGE SCALE MRNA]</scope>
    <source>
        <strain>C57BL/6J</strain>
        <tissue>Brain</tissue>
    </source>
</reference>
<reference key="3">
    <citation type="journal article" date="2006" name="Nature">
        <title>ClC-7 requires Ostm1 as a beta-subunit to support bone resorption and lysosomal function.</title>
        <authorList>
            <person name="Lange P.F."/>
            <person name="Wartosch L."/>
            <person name="Jentsch T.J."/>
            <person name="Fuhrmann J.C."/>
        </authorList>
    </citation>
    <scope>FUNCTION</scope>
    <scope>SUBUNIT</scope>
    <scope>INTERACTION WITH OSTM1</scope>
    <scope>SUBCELLULAR LOCATION</scope>
</reference>
<reference key="4">
    <citation type="journal article" date="2009" name="FASEB J.">
        <title>Lysosomal degradation of endocytosed proteins depends on the chloride transport protein ClC-7.</title>
        <authorList>
            <person name="Wartosch L."/>
            <person name="Fuhrmann J.C."/>
            <person name="Schweizer M."/>
            <person name="Stauber T."/>
            <person name="Jentsch T.J."/>
        </authorList>
    </citation>
    <scope>FUNCTION</scope>
    <scope>DISRUPTION PHENOTYPE</scope>
</reference>
<reference key="5">
    <citation type="journal article" date="2019" name="Am. J. Hum. Genet.">
        <title>Lysosomal Storage and Albinism Due to Effects of a De Novo CLCN7 Variant on Lysosomal Acidification.</title>
        <authorList>
            <consortium name="Undiagnosed Diseases Network"/>
            <person name="Nicoli E.R."/>
            <person name="Weston M.R."/>
            <person name="Hackbarth M."/>
            <person name="Becerril A."/>
            <person name="Larson A."/>
            <person name="Zein W.M."/>
            <person name="Baker P.R. II"/>
            <person name="Burke J.D."/>
            <person name="Dorward H."/>
            <person name="Davids M."/>
            <person name="Huang Y."/>
            <person name="Adams D.R."/>
            <person name="Zerfas P.M."/>
            <person name="Chen D."/>
            <person name="Markello T.C."/>
            <person name="Toro C."/>
            <person name="Wood T."/>
            <person name="Elliott G."/>
            <person name="Vu M."/>
            <person name="Zheng W."/>
            <person name="Garrett L.J."/>
            <person name="Tifft C.J."/>
            <person name="Gahl W.A."/>
            <person name="Day-Salvatore D.L."/>
            <person name="Mindell J.A."/>
            <person name="Malicdan M.C.V."/>
        </authorList>
    </citation>
    <scope>TISSUE SPECIFICITY</scope>
    <scope>SUBCELLULAR LOCATION</scope>
    <scope>MUTAGENESIS OF TYR-713</scope>
</reference>
<reference key="6">
    <citation type="journal article" date="2009" name="Immunity">
        <title>The phagosomal proteome in interferon-gamma-activated macrophages.</title>
        <authorList>
            <person name="Trost M."/>
            <person name="English L."/>
            <person name="Lemieux S."/>
            <person name="Courcelles M."/>
            <person name="Desjardins M."/>
            <person name="Thibault P."/>
        </authorList>
    </citation>
    <scope>PHOSPHORYLATION [LARGE SCALE ANALYSIS] AT SER-9</scope>
    <scope>IDENTIFICATION BY MASS SPECTROMETRY [LARGE SCALE ANALYSIS]</scope>
</reference>
<dbReference type="EMBL" id="AF063101">
    <property type="protein sequence ID" value="AAC18832.1"/>
    <property type="molecule type" value="Genomic_DNA"/>
</dbReference>
<dbReference type="EMBL" id="AF063098">
    <property type="protein sequence ID" value="AAC18832.1"/>
    <property type="status" value="JOINED"/>
    <property type="molecule type" value="Genomic_DNA"/>
</dbReference>
<dbReference type="EMBL" id="AF063099">
    <property type="protein sequence ID" value="AAC18832.1"/>
    <property type="status" value="JOINED"/>
    <property type="molecule type" value="Genomic_DNA"/>
</dbReference>
<dbReference type="EMBL" id="AF063100">
    <property type="protein sequence ID" value="AAC18832.1"/>
    <property type="status" value="JOINED"/>
    <property type="molecule type" value="Genomic_DNA"/>
</dbReference>
<dbReference type="EMBL" id="BC050907">
    <property type="protein sequence ID" value="AAH50907.1"/>
    <property type="molecule type" value="mRNA"/>
</dbReference>
<dbReference type="EMBL" id="BC053049">
    <property type="protein sequence ID" value="AAH53049.1"/>
    <property type="molecule type" value="mRNA"/>
</dbReference>
<dbReference type="EMBL" id="BC054799">
    <property type="protein sequence ID" value="AAH54799.1"/>
    <property type="molecule type" value="mRNA"/>
</dbReference>
<dbReference type="CCDS" id="CCDS28509.1"/>
<dbReference type="RefSeq" id="NP_036060.1">
    <property type="nucleotide sequence ID" value="NM_011930.4"/>
</dbReference>
<dbReference type="SMR" id="O70496"/>
<dbReference type="BioGRID" id="204933">
    <property type="interactions" value="3"/>
</dbReference>
<dbReference type="FunCoup" id="O70496">
    <property type="interactions" value="1311"/>
</dbReference>
<dbReference type="IntAct" id="O70496">
    <property type="interactions" value="1"/>
</dbReference>
<dbReference type="STRING" id="10090.ENSMUSP00000035964"/>
<dbReference type="GlyGen" id="O70496">
    <property type="glycosylation" value="1 site, 1 N-linked glycan (1 site)"/>
</dbReference>
<dbReference type="iPTMnet" id="O70496"/>
<dbReference type="PhosphoSitePlus" id="O70496"/>
<dbReference type="SwissPalm" id="O70496"/>
<dbReference type="jPOST" id="O70496"/>
<dbReference type="PaxDb" id="10090-ENSMUSP00000035964"/>
<dbReference type="PeptideAtlas" id="O70496"/>
<dbReference type="ProteomicsDB" id="283282"/>
<dbReference type="Pumba" id="O70496"/>
<dbReference type="Antibodypedia" id="23121">
    <property type="antibodies" value="209 antibodies from 27 providers"/>
</dbReference>
<dbReference type="DNASU" id="26373"/>
<dbReference type="Ensembl" id="ENSMUST00000040729.9">
    <property type="protein sequence ID" value="ENSMUSP00000035964.3"/>
    <property type="gene ID" value="ENSMUSG00000036636.11"/>
</dbReference>
<dbReference type="GeneID" id="26373"/>
<dbReference type="KEGG" id="mmu:26373"/>
<dbReference type="UCSC" id="uc008azv.1">
    <property type="organism name" value="mouse"/>
</dbReference>
<dbReference type="AGR" id="MGI:1347048"/>
<dbReference type="CTD" id="1186"/>
<dbReference type="MGI" id="MGI:1347048">
    <property type="gene designation" value="Clcn7"/>
</dbReference>
<dbReference type="VEuPathDB" id="HostDB:ENSMUSG00000036636"/>
<dbReference type="eggNOG" id="KOG0474">
    <property type="taxonomic scope" value="Eukaryota"/>
</dbReference>
<dbReference type="GeneTree" id="ENSGT00940000158458"/>
<dbReference type="HOGENOM" id="CLU_003181_4_1_1"/>
<dbReference type="InParanoid" id="O70496"/>
<dbReference type="OrthoDB" id="428525at2759"/>
<dbReference type="PhylomeDB" id="O70496"/>
<dbReference type="TreeFam" id="TF313867"/>
<dbReference type="Reactome" id="R-MMU-2672351">
    <property type="pathway name" value="Stimuli-sensing channels"/>
</dbReference>
<dbReference type="BioGRID-ORCS" id="26373">
    <property type="hits" value="2 hits in 78 CRISPR screens"/>
</dbReference>
<dbReference type="ChiTaRS" id="Clcn7">
    <property type="organism name" value="mouse"/>
</dbReference>
<dbReference type="PRO" id="PR:O70496"/>
<dbReference type="Proteomes" id="UP000000589">
    <property type="component" value="Chromosome 17"/>
</dbReference>
<dbReference type="RNAct" id="O70496">
    <property type="molecule type" value="protein"/>
</dbReference>
<dbReference type="Bgee" id="ENSMUSG00000036636">
    <property type="expression patterns" value="Expressed in superior surface of tongue and 259 other cell types or tissues"/>
</dbReference>
<dbReference type="ExpressionAtlas" id="O70496">
    <property type="expression patterns" value="baseline and differential"/>
</dbReference>
<dbReference type="GO" id="GO:0034707">
    <property type="term" value="C:chloride channel complex"/>
    <property type="evidence" value="ECO:0007669"/>
    <property type="project" value="Ensembl"/>
</dbReference>
<dbReference type="GO" id="GO:0005765">
    <property type="term" value="C:lysosomal membrane"/>
    <property type="evidence" value="ECO:0007669"/>
    <property type="project" value="UniProtKB-SubCell"/>
</dbReference>
<dbReference type="GO" id="GO:0005524">
    <property type="term" value="F:ATP binding"/>
    <property type="evidence" value="ECO:0007669"/>
    <property type="project" value="UniProtKB-KW"/>
</dbReference>
<dbReference type="GO" id="GO:0062158">
    <property type="term" value="F:chloride:proton antiporter activity"/>
    <property type="evidence" value="ECO:0007669"/>
    <property type="project" value="InterPro"/>
</dbReference>
<dbReference type="GO" id="GO:0009268">
    <property type="term" value="P:response to pH"/>
    <property type="evidence" value="ECO:0007669"/>
    <property type="project" value="Ensembl"/>
</dbReference>
<dbReference type="GO" id="GO:0030321">
    <property type="term" value="P:transepithelial chloride transport"/>
    <property type="evidence" value="ECO:0007669"/>
    <property type="project" value="Ensembl"/>
</dbReference>
<dbReference type="CDD" id="cd04591">
    <property type="entry name" value="CBS_pair_voltage-gated_CLC_euk_bac"/>
    <property type="match status" value="1"/>
</dbReference>
<dbReference type="CDD" id="cd03685">
    <property type="entry name" value="ClC_6_like"/>
    <property type="match status" value="1"/>
</dbReference>
<dbReference type="FunFam" id="3.10.580.10:FF:000076">
    <property type="entry name" value="Chloride channel protein"/>
    <property type="match status" value="1"/>
</dbReference>
<dbReference type="Gene3D" id="3.10.580.10">
    <property type="entry name" value="CBS-domain"/>
    <property type="match status" value="1"/>
</dbReference>
<dbReference type="Gene3D" id="1.10.3080.10">
    <property type="entry name" value="Clc chloride channel"/>
    <property type="match status" value="1"/>
</dbReference>
<dbReference type="InterPro" id="IPR000644">
    <property type="entry name" value="CBS_dom"/>
</dbReference>
<dbReference type="InterPro" id="IPR046342">
    <property type="entry name" value="CBS_dom_sf"/>
</dbReference>
<dbReference type="InterPro" id="IPR002249">
    <property type="entry name" value="CIC-7"/>
</dbReference>
<dbReference type="InterPro" id="IPR051280">
    <property type="entry name" value="Cl-channel/antiporter"/>
</dbReference>
<dbReference type="InterPro" id="IPR014743">
    <property type="entry name" value="Cl-channel_core"/>
</dbReference>
<dbReference type="InterPro" id="IPR001807">
    <property type="entry name" value="ClC"/>
</dbReference>
<dbReference type="PANTHER" id="PTHR11689">
    <property type="entry name" value="CHLORIDE CHANNEL PROTEIN CLC FAMILY MEMBER"/>
    <property type="match status" value="1"/>
</dbReference>
<dbReference type="PANTHER" id="PTHR11689:SF136">
    <property type="entry name" value="H(+)_CL(-) EXCHANGE TRANSPORTER 7"/>
    <property type="match status" value="1"/>
</dbReference>
<dbReference type="Pfam" id="PF00571">
    <property type="entry name" value="CBS"/>
    <property type="match status" value="1"/>
</dbReference>
<dbReference type="Pfam" id="PF00654">
    <property type="entry name" value="Voltage_CLC"/>
    <property type="match status" value="1"/>
</dbReference>
<dbReference type="PRINTS" id="PR00762">
    <property type="entry name" value="CLCHANNEL"/>
</dbReference>
<dbReference type="PRINTS" id="PR01118">
    <property type="entry name" value="CLCHANNEL7"/>
</dbReference>
<dbReference type="SMART" id="SM00116">
    <property type="entry name" value="CBS"/>
    <property type="match status" value="2"/>
</dbReference>
<dbReference type="SUPFAM" id="SSF54631">
    <property type="entry name" value="CBS-domain pair"/>
    <property type="match status" value="1"/>
</dbReference>
<dbReference type="SUPFAM" id="SSF81340">
    <property type="entry name" value="Clc chloride channel"/>
    <property type="match status" value="1"/>
</dbReference>
<dbReference type="PROSITE" id="PS51371">
    <property type="entry name" value="CBS"/>
    <property type="match status" value="2"/>
</dbReference>